<reference evidence="6" key="1">
    <citation type="journal article" date="2014" name="BMC Biol.">
        <title>A comprehensive evaluation of rodent malaria parasite genomes and gene expression.</title>
        <authorList>
            <person name="Otto T.D."/>
            <person name="Bohme U."/>
            <person name="Jackson A.P."/>
            <person name="Hunt M."/>
            <person name="Franke-Fayard B."/>
            <person name="Hoeijmakers W.A."/>
            <person name="Religa A.A."/>
            <person name="Robertson L."/>
            <person name="Sanders M."/>
            <person name="Ogun S.A."/>
            <person name="Cunningham D."/>
            <person name="Erhart A."/>
            <person name="Billker O."/>
            <person name="Khan S.M."/>
            <person name="Stunnenberg H.G."/>
            <person name="Langhorne J."/>
            <person name="Holder A.A."/>
            <person name="Waters A.P."/>
            <person name="Newbold C.I."/>
            <person name="Pain A."/>
            <person name="Berriman M."/>
            <person name="Janse C.J."/>
        </authorList>
    </citation>
    <scope>NUCLEOTIDE SEQUENCE [LARGE SCALE GENOMIC DNA]</scope>
    <source>
        <strain evidence="6">AS</strain>
    </source>
</reference>
<sequence length="913" mass="105963">MANASKTQIIDYEGHIIDDLKEWMSDNGLSKLGFNYNVIAILGSQSSGKSTLLNNLFKTSFEVMNTKLGHSQTTQGLWLSYDKFEDELAGGSSEGTDAESKNKSGDKPVVNPTLILDVEGNDSKERGENRLTFEHRSALFSLALADCVIVNLWYHSLGNFTASNYGLLKTVMEVHLELFHQNVNCPKTILMFTVRDWFEEFAPLDVIREKIIEEYVNKIWQELKKPKSSKNAKVDDYFIIEVVGLSHGIIKKDEFLKDIKRLRHRWVYELRPVNYSRNIPADGFAQYCHNIWNTIVKQSQLDIPSQQEMLATFRCQEIKNNVLNSISGMIKEKIIDSKNRYIENFKTWAETDIIEKSVNEYLIDASRYQRSICLKTLEELLEAIFIQLQTIVDNNLNYTQRILSSKFSKELNSMYSVCTTDKGYFLLSSDKNADATEQDDNLSNMDKSGESAKKGNQSKCINLWSNFLYNADMLEYTTISNFYDQYKKCTIEIVEGSMASNESKDSQEKKNHDFNYKNSLTILATSIYKDTNRIRSVQCNILIERIRATIKEELKNVDNMLVTVKCSKDYWDYILKVTNKLEDYIYTNLSKCFVNLKIGINTTHLNNGDNIYARLNTNSDYGFVYSHNDHMYDFSDDENNNFDEIDTEIDQSKNDMESLFNSKKFEIITKQNKKEKYVSSINNDLTKEMNNKKLILELKNFYIEIIIDALKIKLDEISNDIANVIINRFESVFNYDEIEQPRQWRNVSVVELKNIFRVSKDYAFLIVEILQKNIKIDKLDKHLPNNFINTDIIEKGKSKAKKRIQEICRDAQYIQETGGQMSLKNVPFAFWVILLILGWNEILMFTRLFFRLNIILPMFMAFIIIVGSCLYTGNAQVLSYLNKIAFIVIKHSYNFYKHLQTVGNQPTKPEKVD</sequence>
<proteinExistence type="inferred from homology"/>
<comment type="function">
    <text evidence="1">Probable GTP-binding protein involved in generating and maintaining the structure of the tubular endoplasmic reticulum network.</text>
</comment>
<comment type="subcellular location">
    <subcellularLocation>
        <location evidence="2">Endoplasmic reticulum membrane</location>
        <topology evidence="2">Multi-pass membrane protein</topology>
    </subcellularLocation>
</comment>
<comment type="similarity">
    <text evidence="3">Belongs to the TRAFAC class dynamin-like GTPase superfamily. GB1/RHD3 GTPase family. RHD3 subfamily.</text>
</comment>
<organism evidence="6">
    <name type="scientific">Plasmodium chabaudi chabaudi</name>
    <dbReference type="NCBI Taxonomy" id="31271"/>
    <lineage>
        <taxon>Eukaryota</taxon>
        <taxon>Sar</taxon>
        <taxon>Alveolata</taxon>
        <taxon>Apicomplexa</taxon>
        <taxon>Aconoidasida</taxon>
        <taxon>Haemosporida</taxon>
        <taxon>Plasmodiidae</taxon>
        <taxon>Plasmodium</taxon>
        <taxon>Plasmodium (Vinckeia)</taxon>
    </lineage>
</organism>
<keyword id="KW-0175">Coiled coil</keyword>
<keyword id="KW-0256">Endoplasmic reticulum</keyword>
<keyword id="KW-0342">GTP-binding</keyword>
<keyword id="KW-0378">Hydrolase</keyword>
<keyword id="KW-0472">Membrane</keyword>
<keyword id="KW-0547">Nucleotide-binding</keyword>
<keyword id="KW-0812">Transmembrane</keyword>
<keyword id="KW-1133">Transmembrane helix</keyword>
<accession>Q4XZY3</accession>
<accession>A0A4V0K2D5</accession>
<feature type="chain" id="PRO_0000384954" description="Protein SEY1 homolog">
    <location>
        <begin position="1"/>
        <end position="913"/>
    </location>
</feature>
<feature type="topological domain" description="Cytoplasmic" evidence="2">
    <location>
        <begin position="1"/>
        <end position="825"/>
    </location>
</feature>
<feature type="transmembrane region" description="Helical" evidence="2">
    <location>
        <begin position="826"/>
        <end position="846"/>
    </location>
</feature>
<feature type="topological domain" description="Lumenal" evidence="2">
    <location>
        <begin position="847"/>
        <end position="849"/>
    </location>
</feature>
<feature type="transmembrane region" description="Helical" evidence="2">
    <location>
        <begin position="850"/>
        <end position="870"/>
    </location>
</feature>
<feature type="topological domain" description="Cytoplasmic" evidence="2">
    <location>
        <begin position="871"/>
        <end position="913"/>
    </location>
</feature>
<feature type="domain" description="GB1/RHD3-type G" evidence="3">
    <location>
        <begin position="33"/>
        <end position="288"/>
    </location>
</feature>
<feature type="region of interest" description="Disordered" evidence="4">
    <location>
        <begin position="89"/>
        <end position="108"/>
    </location>
</feature>
<feature type="region of interest" description="Disordered" evidence="4">
    <location>
        <begin position="436"/>
        <end position="455"/>
    </location>
</feature>
<feature type="coiled-coil region" evidence="2">
    <location>
        <begin position="636"/>
        <end position="659"/>
    </location>
</feature>
<feature type="coiled-coil region" evidence="2">
    <location>
        <begin position="703"/>
        <end position="727"/>
    </location>
</feature>
<feature type="binding site" evidence="2">
    <location>
        <begin position="43"/>
        <end position="50"/>
    </location>
    <ligand>
        <name>GTP</name>
        <dbReference type="ChEBI" id="CHEBI:37565"/>
    </ligand>
</feature>
<evidence type="ECO:0000250" key="1">
    <source>
        <dbReference type="UniProtKB" id="A0A509AN59"/>
    </source>
</evidence>
<evidence type="ECO:0000255" key="2">
    <source>
        <dbReference type="HAMAP-Rule" id="MF_03109"/>
    </source>
</evidence>
<evidence type="ECO:0000255" key="3">
    <source>
        <dbReference type="PROSITE-ProRule" id="PRU01052"/>
    </source>
</evidence>
<evidence type="ECO:0000256" key="4">
    <source>
        <dbReference type="SAM" id="MobiDB-lite"/>
    </source>
</evidence>
<evidence type="ECO:0000312" key="5">
    <source>
        <dbReference type="EMBL" id="VTZ66610.1"/>
    </source>
</evidence>
<evidence type="ECO:0000312" key="6">
    <source>
        <dbReference type="Proteomes" id="UP000071118"/>
    </source>
</evidence>
<protein>
    <recommendedName>
        <fullName evidence="2">Protein SEY1 homolog</fullName>
        <ecNumber evidence="2">3.6.5.-</ecNumber>
    </recommendedName>
</protein>
<name>SEY1_PLACU</name>
<dbReference type="EC" id="3.6.5.-" evidence="2"/>
<dbReference type="EMBL" id="LK022887">
    <property type="protein sequence ID" value="VTZ66610.1"/>
    <property type="molecule type" value="Genomic_DNA"/>
</dbReference>
<dbReference type="RefSeq" id="XP_744458.1">
    <property type="nucleotide sequence ID" value="XM_739365.1"/>
</dbReference>
<dbReference type="SMR" id="Q4XZY3"/>
<dbReference type="GeneID" id="3497572"/>
<dbReference type="KEGG" id="pcb:PCHAS_1027400"/>
<dbReference type="VEuPathDB" id="PlasmoDB:PCHAS_1027400"/>
<dbReference type="eggNOG" id="KOG2203">
    <property type="taxonomic scope" value="Eukaryota"/>
</dbReference>
<dbReference type="HOGENOM" id="CLU_312978_0_0_1"/>
<dbReference type="OrthoDB" id="1597724at2759"/>
<dbReference type="Proteomes" id="UP000071118">
    <property type="component" value="Chromosome 10"/>
</dbReference>
<dbReference type="GO" id="GO:0005789">
    <property type="term" value="C:endoplasmic reticulum membrane"/>
    <property type="evidence" value="ECO:0007669"/>
    <property type="project" value="UniProtKB-SubCell"/>
</dbReference>
<dbReference type="GO" id="GO:0005525">
    <property type="term" value="F:GTP binding"/>
    <property type="evidence" value="ECO:0007669"/>
    <property type="project" value="UniProtKB-UniRule"/>
</dbReference>
<dbReference type="GO" id="GO:0003924">
    <property type="term" value="F:GTPase activity"/>
    <property type="evidence" value="ECO:0007669"/>
    <property type="project" value="UniProtKB-UniRule"/>
</dbReference>
<dbReference type="GO" id="GO:0016320">
    <property type="term" value="P:endoplasmic reticulum membrane fusion"/>
    <property type="evidence" value="ECO:0007669"/>
    <property type="project" value="TreeGrafter"/>
</dbReference>
<dbReference type="CDD" id="cd01851">
    <property type="entry name" value="GBP"/>
    <property type="match status" value="1"/>
</dbReference>
<dbReference type="FunFam" id="3.40.50.300:FF:000727">
    <property type="entry name" value="Protein SEY1 homolog"/>
    <property type="match status" value="1"/>
</dbReference>
<dbReference type="Gene3D" id="3.40.50.300">
    <property type="entry name" value="P-loop containing nucleotide triphosphate hydrolases"/>
    <property type="match status" value="1"/>
</dbReference>
<dbReference type="HAMAP" id="MF_03109">
    <property type="entry name" value="Sey1"/>
    <property type="match status" value="1"/>
</dbReference>
<dbReference type="InterPro" id="IPR030386">
    <property type="entry name" value="G_GB1_RHD3_dom"/>
</dbReference>
<dbReference type="InterPro" id="IPR027417">
    <property type="entry name" value="P-loop_NTPase"/>
</dbReference>
<dbReference type="InterPro" id="IPR008803">
    <property type="entry name" value="RHD3/Sey1"/>
</dbReference>
<dbReference type="PANTHER" id="PTHR45923">
    <property type="entry name" value="PROTEIN SEY1"/>
    <property type="match status" value="1"/>
</dbReference>
<dbReference type="PANTHER" id="PTHR45923:SF2">
    <property type="entry name" value="PROTEIN SEY1"/>
    <property type="match status" value="1"/>
</dbReference>
<dbReference type="Pfam" id="PF05879">
    <property type="entry name" value="RHD3_GTPase"/>
    <property type="match status" value="1"/>
</dbReference>
<dbReference type="SUPFAM" id="SSF52540">
    <property type="entry name" value="P-loop containing nucleoside triphosphate hydrolases"/>
    <property type="match status" value="1"/>
</dbReference>
<dbReference type="PROSITE" id="PS51715">
    <property type="entry name" value="G_GB1_RHD3"/>
    <property type="match status" value="1"/>
</dbReference>
<gene>
    <name evidence="1" type="primary">SEY1</name>
    <name type="ORF">PC000321.02.0</name>
    <name evidence="5" type="ORF">PCHAS_1027400</name>
</gene>